<accession>P38666</accession>
<accession>Q33DV0</accession>
<accession>Q56Z81</accession>
<accession>Q9LF90</accession>
<protein>
    <recommendedName>
        <fullName evidence="9">Large ribosomal subunit protein eL24y</fullName>
    </recommendedName>
    <alternativeName>
        <fullName evidence="7">60S ribosomal protein L24-2</fullName>
    </alternativeName>
    <alternativeName>
        <fullName evidence="8">Protein SHORT VALVE 1</fullName>
    </alternativeName>
</protein>
<proteinExistence type="evidence at protein level"/>
<evidence type="ECO:0000250" key="1">
    <source>
        <dbReference type="UniProtKB" id="O82204"/>
    </source>
</evidence>
<evidence type="ECO:0000250" key="2">
    <source>
        <dbReference type="UniProtKB" id="P46779"/>
    </source>
</evidence>
<evidence type="ECO:0000256" key="3">
    <source>
        <dbReference type="SAM" id="MobiDB-lite"/>
    </source>
</evidence>
<evidence type="ECO:0000269" key="4">
    <source>
    </source>
</evidence>
<evidence type="ECO:0000269" key="5">
    <source>
    </source>
</evidence>
<evidence type="ECO:0000269" key="6">
    <source>
    </source>
</evidence>
<evidence type="ECO:0000303" key="7">
    <source>
    </source>
</evidence>
<evidence type="ECO:0000303" key="8">
    <source>
    </source>
</evidence>
<evidence type="ECO:0000303" key="9">
    <source>
    </source>
</evidence>
<evidence type="ECO:0000305" key="10"/>
<evidence type="ECO:0000305" key="11">
    <source>
    </source>
</evidence>
<evidence type="ECO:0000312" key="12">
    <source>
        <dbReference type="Araport" id="AT3G53020"/>
    </source>
</evidence>
<evidence type="ECO:0000312" key="13">
    <source>
        <dbReference type="EMBL" id="CAB86906.1"/>
    </source>
</evidence>
<gene>
    <name evidence="7" type="primary">RPL24B</name>
    <name evidence="8" type="synonym">STV1</name>
    <name evidence="12" type="ordered locus">At3g53020</name>
    <name evidence="13" type="ORF">F8J2_190</name>
</gene>
<comment type="function">
    <text evidence="4 5">Might have an extraribosomal function in reinitiation of translation of ETTIN and MONOPTEROS genes that are involved in the auxin-mediated gynoecium patterning (PubMed:16227452). Essential in leaf polarity establishment, probably having a role for translation in leaf dorsoventral patterning to specify leaf adaxial identity (PubMed:18305007).</text>
</comment>
<comment type="subunit">
    <text evidence="2 6">Interacts with REIL1 and REIL2 (PubMed:24603461). Component of the large ribosomal subunit (By similarity).</text>
</comment>
<comment type="subcellular location">
    <subcellularLocation>
        <location evidence="11">Cytoplasm</location>
    </subcellularLocation>
    <subcellularLocation>
        <location evidence="1">Nucleus</location>
    </subcellularLocation>
    <subcellularLocation>
        <location evidence="1">Nucleus</location>
        <location evidence="1">Nucleolus</location>
    </subcellularLocation>
    <subcellularLocation>
        <location evidence="1">Nucleus</location>
        <location evidence="1">Nucleoplasm</location>
    </subcellularLocation>
</comment>
<comment type="tissue specificity">
    <text evidence="4">Ubiquitous.</text>
</comment>
<comment type="disruption phenotype">
    <text evidence="5">Abnormal leaf patterning, with the abaxial mesophyll features appearing in the adaxial mesophyll domain.</text>
</comment>
<comment type="similarity">
    <text evidence="10">Belongs to the eukaryotic ribosomal protein eL24 family.</text>
</comment>
<comment type="sequence caution" evidence="10">
    <conflict type="frameshift">
        <sequence resource="EMBL" id="Z26463"/>
    </conflict>
</comment>
<sequence length="163" mass="18632">MVLKTELCRFSGQKIYPGRGIRFIRSDSQVFLFLNSKCKRYFHNKLKPSKLAWTAMYRKQHKKDAAQEAVKRRRRATKKPYSRSIVGATLEVIQKKRAEKPEVRDAAREAALREIKERIKKTKDEKKAKKVEFASKQQKVKANFPKAAAASKGPKVGGGGGKR</sequence>
<name>RL242_ARATH</name>
<feature type="chain" id="PRO_0000136881" description="Large ribosomal subunit protein eL24y">
    <location>
        <begin position="1"/>
        <end position="163"/>
    </location>
</feature>
<feature type="region of interest" description="Disordered" evidence="3">
    <location>
        <begin position="119"/>
        <end position="163"/>
    </location>
</feature>
<feature type="compositionally biased region" description="Basic and acidic residues" evidence="3">
    <location>
        <begin position="119"/>
        <end position="133"/>
    </location>
</feature>
<feature type="sequence conflict" description="In Ref. 5; Z26463." evidence="10" ref="5">
    <original>M</original>
    <variation>I</variation>
    <location>
        <position position="56"/>
    </location>
</feature>
<feature type="sequence conflict" description="In Ref. 5; Z26463." evidence="10" ref="5">
    <original>D</original>
    <variation>V</variation>
    <location>
        <position position="124"/>
    </location>
</feature>
<reference key="1">
    <citation type="journal article" date="2005" name="Plant Cell">
        <title>The Arabidopsis STV1 protein, responsible for translation reinitiation, is required for auxin-mediated gynoecium patterning.</title>
        <authorList>
            <person name="Nishimura T."/>
            <person name="Wada T."/>
            <person name="Yamamoto K.T."/>
            <person name="Okada K."/>
        </authorList>
    </citation>
    <scope>NUCLEOTIDE SEQUENCE [MRNA]</scope>
    <scope>FUNCTION</scope>
    <scope>TISSUE SPECIFICITY</scope>
    <source>
        <strain>cv. Landsberg erecta</strain>
    </source>
</reference>
<reference key="2">
    <citation type="journal article" date="2000" name="Nature">
        <title>Sequence and analysis of chromosome 3 of the plant Arabidopsis thaliana.</title>
        <authorList>
            <person name="Salanoubat M."/>
            <person name="Lemcke K."/>
            <person name="Rieger M."/>
            <person name="Ansorge W."/>
            <person name="Unseld M."/>
            <person name="Fartmann B."/>
            <person name="Valle G."/>
            <person name="Bloecker H."/>
            <person name="Perez-Alonso M."/>
            <person name="Obermaier B."/>
            <person name="Delseny M."/>
            <person name="Boutry M."/>
            <person name="Grivell L.A."/>
            <person name="Mache R."/>
            <person name="Puigdomenech P."/>
            <person name="De Simone V."/>
            <person name="Choisne N."/>
            <person name="Artiguenave F."/>
            <person name="Robert C."/>
            <person name="Brottier P."/>
            <person name="Wincker P."/>
            <person name="Cattolico L."/>
            <person name="Weissenbach J."/>
            <person name="Saurin W."/>
            <person name="Quetier F."/>
            <person name="Schaefer M."/>
            <person name="Mueller-Auer S."/>
            <person name="Gabel C."/>
            <person name="Fuchs M."/>
            <person name="Benes V."/>
            <person name="Wurmbach E."/>
            <person name="Drzonek H."/>
            <person name="Erfle H."/>
            <person name="Jordan N."/>
            <person name="Bangert S."/>
            <person name="Wiedelmann R."/>
            <person name="Kranz H."/>
            <person name="Voss H."/>
            <person name="Holland R."/>
            <person name="Brandt P."/>
            <person name="Nyakatura G."/>
            <person name="Vezzi A."/>
            <person name="D'Angelo M."/>
            <person name="Pallavicini A."/>
            <person name="Toppo S."/>
            <person name="Simionati B."/>
            <person name="Conrad A."/>
            <person name="Hornischer K."/>
            <person name="Kauer G."/>
            <person name="Loehnert T.-H."/>
            <person name="Nordsiek G."/>
            <person name="Reichelt J."/>
            <person name="Scharfe M."/>
            <person name="Schoen O."/>
            <person name="Bargues M."/>
            <person name="Terol J."/>
            <person name="Climent J."/>
            <person name="Navarro P."/>
            <person name="Collado C."/>
            <person name="Perez-Perez A."/>
            <person name="Ottenwaelder B."/>
            <person name="Duchemin D."/>
            <person name="Cooke R."/>
            <person name="Laudie M."/>
            <person name="Berger-Llauro C."/>
            <person name="Purnelle B."/>
            <person name="Masuy D."/>
            <person name="de Haan M."/>
            <person name="Maarse A.C."/>
            <person name="Alcaraz J.-P."/>
            <person name="Cottet A."/>
            <person name="Casacuberta E."/>
            <person name="Monfort A."/>
            <person name="Argiriou A."/>
            <person name="Flores M."/>
            <person name="Liguori R."/>
            <person name="Vitale D."/>
            <person name="Mannhaupt G."/>
            <person name="Haase D."/>
            <person name="Schoof H."/>
            <person name="Rudd S."/>
            <person name="Zaccaria P."/>
            <person name="Mewes H.-W."/>
            <person name="Mayer K.F.X."/>
            <person name="Kaul S."/>
            <person name="Town C.D."/>
            <person name="Koo H.L."/>
            <person name="Tallon L.J."/>
            <person name="Jenkins J."/>
            <person name="Rooney T."/>
            <person name="Rizzo M."/>
            <person name="Walts A."/>
            <person name="Utterback T."/>
            <person name="Fujii C.Y."/>
            <person name="Shea T.P."/>
            <person name="Creasy T.H."/>
            <person name="Haas B."/>
            <person name="Maiti R."/>
            <person name="Wu D."/>
            <person name="Peterson J."/>
            <person name="Van Aken S."/>
            <person name="Pai G."/>
            <person name="Militscher J."/>
            <person name="Sellers P."/>
            <person name="Gill J.E."/>
            <person name="Feldblyum T.V."/>
            <person name="Preuss D."/>
            <person name="Lin X."/>
            <person name="Nierman W.C."/>
            <person name="Salzberg S.L."/>
            <person name="White O."/>
            <person name="Venter J.C."/>
            <person name="Fraser C.M."/>
            <person name="Kaneko T."/>
            <person name="Nakamura Y."/>
            <person name="Sato S."/>
            <person name="Kato T."/>
            <person name="Asamizu E."/>
            <person name="Sasamoto S."/>
            <person name="Kimura T."/>
            <person name="Idesawa K."/>
            <person name="Kawashima K."/>
            <person name="Kishida Y."/>
            <person name="Kiyokawa C."/>
            <person name="Kohara M."/>
            <person name="Matsumoto M."/>
            <person name="Matsuno A."/>
            <person name="Muraki A."/>
            <person name="Nakayama S."/>
            <person name="Nakazaki N."/>
            <person name="Shinpo S."/>
            <person name="Takeuchi C."/>
            <person name="Wada T."/>
            <person name="Watanabe A."/>
            <person name="Yamada M."/>
            <person name="Yasuda M."/>
            <person name="Tabata S."/>
        </authorList>
    </citation>
    <scope>NUCLEOTIDE SEQUENCE [LARGE SCALE GENOMIC DNA]</scope>
    <source>
        <strain>cv. Columbia</strain>
    </source>
</reference>
<reference key="3">
    <citation type="journal article" date="2017" name="Plant J.">
        <title>Araport11: a complete reannotation of the Arabidopsis thaliana reference genome.</title>
        <authorList>
            <person name="Cheng C.Y."/>
            <person name="Krishnakumar V."/>
            <person name="Chan A.P."/>
            <person name="Thibaud-Nissen F."/>
            <person name="Schobel S."/>
            <person name="Town C.D."/>
        </authorList>
    </citation>
    <scope>GENOME REANNOTATION</scope>
    <source>
        <strain>cv. Columbia</strain>
    </source>
</reference>
<reference key="4">
    <citation type="journal article" date="2003" name="Science">
        <title>Empirical analysis of transcriptional activity in the Arabidopsis genome.</title>
        <authorList>
            <person name="Yamada K."/>
            <person name="Lim J."/>
            <person name="Dale J.M."/>
            <person name="Chen H."/>
            <person name="Shinn P."/>
            <person name="Palm C.J."/>
            <person name="Southwick A.M."/>
            <person name="Wu H.C."/>
            <person name="Kim C.J."/>
            <person name="Nguyen M."/>
            <person name="Pham P.K."/>
            <person name="Cheuk R.F."/>
            <person name="Karlin-Newmann G."/>
            <person name="Liu S.X."/>
            <person name="Lam B."/>
            <person name="Sakano H."/>
            <person name="Wu T."/>
            <person name="Yu G."/>
            <person name="Miranda M."/>
            <person name="Quach H.L."/>
            <person name="Tripp M."/>
            <person name="Chang C.H."/>
            <person name="Lee J.M."/>
            <person name="Toriumi M.J."/>
            <person name="Chan M.M."/>
            <person name="Tang C.C."/>
            <person name="Onodera C.S."/>
            <person name="Deng J.M."/>
            <person name="Akiyama K."/>
            <person name="Ansari Y."/>
            <person name="Arakawa T."/>
            <person name="Banh J."/>
            <person name="Banno F."/>
            <person name="Bowser L."/>
            <person name="Brooks S.Y."/>
            <person name="Carninci P."/>
            <person name="Chao Q."/>
            <person name="Choy N."/>
            <person name="Enju A."/>
            <person name="Goldsmith A.D."/>
            <person name="Gurjal M."/>
            <person name="Hansen N.F."/>
            <person name="Hayashizaki Y."/>
            <person name="Johnson-Hopson C."/>
            <person name="Hsuan V.W."/>
            <person name="Iida K."/>
            <person name="Karnes M."/>
            <person name="Khan S."/>
            <person name="Koesema E."/>
            <person name="Ishida J."/>
            <person name="Jiang P.X."/>
            <person name="Jones T."/>
            <person name="Kawai J."/>
            <person name="Kamiya A."/>
            <person name="Meyers C."/>
            <person name="Nakajima M."/>
            <person name="Narusaka M."/>
            <person name="Seki M."/>
            <person name="Sakurai T."/>
            <person name="Satou M."/>
            <person name="Tamse R."/>
            <person name="Vaysberg M."/>
            <person name="Wallender E.K."/>
            <person name="Wong C."/>
            <person name="Yamamura Y."/>
            <person name="Yuan S."/>
            <person name="Shinozaki K."/>
            <person name="Davis R.W."/>
            <person name="Theologis A."/>
            <person name="Ecker J.R."/>
        </authorList>
    </citation>
    <scope>NUCLEOTIDE SEQUENCE [LARGE SCALE MRNA]</scope>
    <source>
        <strain>cv. Columbia</strain>
    </source>
</reference>
<reference key="5">
    <citation type="journal article" date="1996" name="Plant J.">
        <title>Further progress towards a catalogue of all Arabidopsis genes: analysis of a set of 5000 non-redundant ESTs.</title>
        <authorList>
            <person name="Cooke R."/>
            <person name="Raynal M."/>
            <person name="Laudie M."/>
            <person name="Grellet F."/>
            <person name="Delseny M."/>
            <person name="Morris P.-C."/>
            <person name="Guerrier D."/>
            <person name="Giraudat J."/>
            <person name="Quigley F."/>
            <person name="Clabault G."/>
            <person name="Li Y.-F."/>
            <person name="Mache R."/>
            <person name="Krivitzky M."/>
            <person name="Gy I.J.-J."/>
            <person name="Kreis M."/>
            <person name="Lecharny A."/>
            <person name="Parmentier Y."/>
            <person name="Marbach J."/>
            <person name="Fleck J."/>
            <person name="Clement B."/>
            <person name="Philipps G."/>
            <person name="Herve C."/>
            <person name="Bardet C."/>
            <person name="Tremousaygue D."/>
            <person name="Lescure B."/>
            <person name="Lacomme C."/>
            <person name="Roby D."/>
            <person name="Jourjon M.-F."/>
            <person name="Chabrier P."/>
            <person name="Charpenteau J.-L."/>
            <person name="Desprez T."/>
            <person name="Amselem J."/>
            <person name="Chiapello H."/>
            <person name="Hoefte H."/>
        </authorList>
    </citation>
    <scope>NUCLEOTIDE SEQUENCE [LARGE SCALE MRNA]</scope>
    <source>
        <strain>cv. Columbia</strain>
    </source>
</reference>
<reference key="6">
    <citation type="submission" date="2005-03" db="EMBL/GenBank/DDBJ databases">
        <title>Large-scale analysis of RIKEN Arabidopsis full-length (RAFL) cDNAs.</title>
        <authorList>
            <person name="Totoki Y."/>
            <person name="Seki M."/>
            <person name="Ishida J."/>
            <person name="Nakajima M."/>
            <person name="Enju A."/>
            <person name="Kamiya A."/>
            <person name="Narusaka M."/>
            <person name="Shin-i T."/>
            <person name="Nakagawa M."/>
            <person name="Sakamoto N."/>
            <person name="Oishi K."/>
            <person name="Kohara Y."/>
            <person name="Kobayashi M."/>
            <person name="Toyoda A."/>
            <person name="Sakaki Y."/>
            <person name="Sakurai T."/>
            <person name="Iida K."/>
            <person name="Akiyama K."/>
            <person name="Satou M."/>
            <person name="Toyoda T."/>
            <person name="Konagaya A."/>
            <person name="Carninci P."/>
            <person name="Kawai J."/>
            <person name="Hayashizaki Y."/>
            <person name="Shinozaki K."/>
        </authorList>
    </citation>
    <scope>NUCLEOTIDE SEQUENCE [LARGE SCALE MRNA] OF 109-163</scope>
    <source>
        <strain>cv. Columbia</strain>
    </source>
</reference>
<reference key="7">
    <citation type="journal article" date="2001" name="Plant Physiol.">
        <title>The organization of cytoplasmic ribosomal protein genes in the Arabidopsis genome.</title>
        <authorList>
            <person name="Barakat A."/>
            <person name="Szick-Miranda K."/>
            <person name="Chang I.-F."/>
            <person name="Guyot R."/>
            <person name="Blanc G."/>
            <person name="Cooke R."/>
            <person name="Delseny M."/>
            <person name="Bailey-Serres J."/>
        </authorList>
    </citation>
    <scope>GENE FAMILY ORGANIZATION</scope>
    <scope>NOMENCLATURE</scope>
</reference>
<reference key="8">
    <citation type="journal article" date="2008" name="Development">
        <title>Ribosomal proteins promote leaf adaxial identity.</title>
        <authorList>
            <person name="Yao Y."/>
            <person name="Ling Q."/>
            <person name="Wang H."/>
            <person name="Huang H."/>
        </authorList>
    </citation>
    <scope>FUNCTION</scope>
    <scope>DISRUPTION PHENOTYPE</scope>
    <source>
        <strain>cv. Columbia</strain>
    </source>
</reference>
<reference key="9">
    <citation type="journal article" date="2014" name="Plant Signal. Behav.">
        <title>REIL proteins of Arabidopsis thaliana interact in yeast-2-hybrid assays with homologs of the yeast Rlp24, Rpl24A, Rlp24B, Arx1, and Jjj1 proteins.</title>
        <authorList>
            <person name="Schmidt S."/>
            <person name="Dethloff F."/>
            <person name="Beine-Golovchuk O."/>
            <person name="Kopka J."/>
        </authorList>
    </citation>
    <scope>INTERACTION WITH REIL1 AND REIL2</scope>
</reference>
<reference key="10">
    <citation type="journal article" date="2023" name="Plant Cell">
        <title>An updated nomenclature for plant ribosomal protein genes.</title>
        <authorList>
            <person name="Scarpin M.R."/>
            <person name="Busche M."/>
            <person name="Martinez R.E."/>
            <person name="Harper L.C."/>
            <person name="Reiser L."/>
            <person name="Szakonyi D."/>
            <person name="Merchante C."/>
            <person name="Lan T."/>
            <person name="Xiong W."/>
            <person name="Mo B."/>
            <person name="Tang G."/>
            <person name="Chen X."/>
            <person name="Bailey-Serres J."/>
            <person name="Browning K.S."/>
            <person name="Brunkard J.O."/>
        </authorList>
    </citation>
    <scope>NOMENCLATURE</scope>
</reference>
<organism>
    <name type="scientific">Arabidopsis thaliana</name>
    <name type="common">Mouse-ear cress</name>
    <dbReference type="NCBI Taxonomy" id="3702"/>
    <lineage>
        <taxon>Eukaryota</taxon>
        <taxon>Viridiplantae</taxon>
        <taxon>Streptophyta</taxon>
        <taxon>Embryophyta</taxon>
        <taxon>Tracheophyta</taxon>
        <taxon>Spermatophyta</taxon>
        <taxon>Magnoliopsida</taxon>
        <taxon>eudicotyledons</taxon>
        <taxon>Gunneridae</taxon>
        <taxon>Pentapetalae</taxon>
        <taxon>rosids</taxon>
        <taxon>malvids</taxon>
        <taxon>Brassicales</taxon>
        <taxon>Brassicaceae</taxon>
        <taxon>Camelineae</taxon>
        <taxon>Arabidopsis</taxon>
    </lineage>
</organism>
<dbReference type="EMBL" id="AB199790">
    <property type="protein sequence ID" value="BAE48150.1"/>
    <property type="molecule type" value="mRNA"/>
</dbReference>
<dbReference type="EMBL" id="AL132969">
    <property type="protein sequence ID" value="CAB86906.1"/>
    <property type="molecule type" value="Genomic_DNA"/>
</dbReference>
<dbReference type="EMBL" id="CP002686">
    <property type="protein sequence ID" value="AEE79026.1"/>
    <property type="molecule type" value="Genomic_DNA"/>
</dbReference>
<dbReference type="EMBL" id="AY058129">
    <property type="protein sequence ID" value="AAL25545.1"/>
    <property type="molecule type" value="mRNA"/>
</dbReference>
<dbReference type="EMBL" id="AY093180">
    <property type="protein sequence ID" value="AAM13179.1"/>
    <property type="molecule type" value="mRNA"/>
</dbReference>
<dbReference type="EMBL" id="BT006545">
    <property type="protein sequence ID" value="AAP21353.1"/>
    <property type="molecule type" value="mRNA"/>
</dbReference>
<dbReference type="EMBL" id="Z26463">
    <property type="status" value="NOT_ANNOTATED_CDS"/>
    <property type="molecule type" value="mRNA"/>
</dbReference>
<dbReference type="EMBL" id="AK221088">
    <property type="protein sequence ID" value="BAD94945.1"/>
    <property type="molecule type" value="mRNA"/>
</dbReference>
<dbReference type="PIR" id="T47559">
    <property type="entry name" value="T47559"/>
</dbReference>
<dbReference type="RefSeq" id="NP_190870.1">
    <property type="nucleotide sequence ID" value="NM_115162.4"/>
</dbReference>
<dbReference type="SMR" id="P38666"/>
<dbReference type="BioGRID" id="9785">
    <property type="interactions" value="40"/>
</dbReference>
<dbReference type="FunCoup" id="P38666">
    <property type="interactions" value="3847"/>
</dbReference>
<dbReference type="IntAct" id="P38666">
    <property type="interactions" value="1"/>
</dbReference>
<dbReference type="STRING" id="3702.P38666"/>
<dbReference type="iPTMnet" id="P38666"/>
<dbReference type="PaxDb" id="3702-AT3G53020.1"/>
<dbReference type="ProteomicsDB" id="237008"/>
<dbReference type="EnsemblPlants" id="AT3G53020.1">
    <property type="protein sequence ID" value="AT3G53020.1"/>
    <property type="gene ID" value="AT3G53020"/>
</dbReference>
<dbReference type="GeneID" id="824468"/>
<dbReference type="Gramene" id="AT3G53020.1">
    <property type="protein sequence ID" value="AT3G53020.1"/>
    <property type="gene ID" value="AT3G53020"/>
</dbReference>
<dbReference type="KEGG" id="ath:AT3G53020"/>
<dbReference type="Araport" id="AT3G53020"/>
<dbReference type="TAIR" id="AT3G53020">
    <property type="gene designation" value="STV1"/>
</dbReference>
<dbReference type="eggNOG" id="KOG1722">
    <property type="taxonomic scope" value="Eukaryota"/>
</dbReference>
<dbReference type="HOGENOM" id="CLU_106411_3_0_1"/>
<dbReference type="InParanoid" id="P38666"/>
<dbReference type="OMA" id="QVFRRMH"/>
<dbReference type="OrthoDB" id="1100595at2759"/>
<dbReference type="PhylomeDB" id="P38666"/>
<dbReference type="CD-CODE" id="4299E36E">
    <property type="entry name" value="Nucleolus"/>
</dbReference>
<dbReference type="PRO" id="PR:P38666"/>
<dbReference type="Proteomes" id="UP000006548">
    <property type="component" value="Chromosome 3"/>
</dbReference>
<dbReference type="ExpressionAtlas" id="P38666">
    <property type="expression patterns" value="baseline and differential"/>
</dbReference>
<dbReference type="GO" id="GO:0005829">
    <property type="term" value="C:cytosol"/>
    <property type="evidence" value="ECO:0007005"/>
    <property type="project" value="TAIR"/>
</dbReference>
<dbReference type="GO" id="GO:0022625">
    <property type="term" value="C:cytosolic large ribosomal subunit"/>
    <property type="evidence" value="ECO:0007005"/>
    <property type="project" value="TAIR"/>
</dbReference>
<dbReference type="GO" id="GO:0005730">
    <property type="term" value="C:nucleolus"/>
    <property type="evidence" value="ECO:0007005"/>
    <property type="project" value="TAIR"/>
</dbReference>
<dbReference type="GO" id="GO:0005654">
    <property type="term" value="C:nucleoplasm"/>
    <property type="evidence" value="ECO:0007669"/>
    <property type="project" value="UniProtKB-SubCell"/>
</dbReference>
<dbReference type="GO" id="GO:0003729">
    <property type="term" value="F:mRNA binding"/>
    <property type="evidence" value="ECO:0000314"/>
    <property type="project" value="TAIR"/>
</dbReference>
<dbReference type="GO" id="GO:0003735">
    <property type="term" value="F:structural constituent of ribosome"/>
    <property type="evidence" value="ECO:0000314"/>
    <property type="project" value="CAFA"/>
</dbReference>
<dbReference type="GO" id="GO:0009955">
    <property type="term" value="P:adaxial/abaxial pattern specification"/>
    <property type="evidence" value="ECO:0000315"/>
    <property type="project" value="UniProtKB"/>
</dbReference>
<dbReference type="GO" id="GO:0009734">
    <property type="term" value="P:auxin-activated signaling pathway"/>
    <property type="evidence" value="ECO:0000315"/>
    <property type="project" value="TAIR"/>
</dbReference>
<dbReference type="GO" id="GO:0048467">
    <property type="term" value="P:gynoecium development"/>
    <property type="evidence" value="ECO:0000315"/>
    <property type="project" value="TAIR"/>
</dbReference>
<dbReference type="GO" id="GO:0009965">
    <property type="term" value="P:leaf morphogenesis"/>
    <property type="evidence" value="ECO:0000315"/>
    <property type="project" value="UniProtKB"/>
</dbReference>
<dbReference type="CDD" id="cd00472">
    <property type="entry name" value="Ribosomal_L24e_L24"/>
    <property type="match status" value="1"/>
</dbReference>
<dbReference type="FunFam" id="2.30.170.20:FF:000003">
    <property type="entry name" value="60S ribosomal protein L24"/>
    <property type="match status" value="1"/>
</dbReference>
<dbReference type="Gene3D" id="6.10.250.1270">
    <property type="match status" value="1"/>
</dbReference>
<dbReference type="Gene3D" id="2.30.170.20">
    <property type="entry name" value="Ribosomal protein L24e"/>
    <property type="match status" value="1"/>
</dbReference>
<dbReference type="InterPro" id="IPR038630">
    <property type="entry name" value="L24e/L24_sf"/>
</dbReference>
<dbReference type="InterPro" id="IPR056366">
    <property type="entry name" value="Ribosomal_eL24"/>
</dbReference>
<dbReference type="InterPro" id="IPR000988">
    <property type="entry name" value="Ribosomal_eL24-rel_N"/>
</dbReference>
<dbReference type="InterPro" id="IPR023442">
    <property type="entry name" value="Ribosomal_eL24_CS"/>
</dbReference>
<dbReference type="InterPro" id="IPR011017">
    <property type="entry name" value="TRASH_dom"/>
</dbReference>
<dbReference type="PANTHER" id="PTHR10792">
    <property type="entry name" value="60S RIBOSOMAL PROTEIN L24"/>
    <property type="match status" value="1"/>
</dbReference>
<dbReference type="PANTHER" id="PTHR10792:SF51">
    <property type="entry name" value="LARGE RIBOSOMAL SUBUNIT PROTEIN EL24Y-RELATED"/>
    <property type="match status" value="1"/>
</dbReference>
<dbReference type="Pfam" id="PF01246">
    <property type="entry name" value="Ribosomal_L24e"/>
    <property type="match status" value="1"/>
</dbReference>
<dbReference type="SMART" id="SM00746">
    <property type="entry name" value="TRASH"/>
    <property type="match status" value="1"/>
</dbReference>
<dbReference type="SUPFAM" id="SSF57716">
    <property type="entry name" value="Glucocorticoid receptor-like (DNA-binding domain)"/>
    <property type="match status" value="1"/>
</dbReference>
<dbReference type="PROSITE" id="PS01073">
    <property type="entry name" value="RIBOSOMAL_L24E"/>
    <property type="match status" value="1"/>
</dbReference>
<keyword id="KW-0963">Cytoplasm</keyword>
<keyword id="KW-0539">Nucleus</keyword>
<keyword id="KW-1185">Reference proteome</keyword>
<keyword id="KW-0687">Ribonucleoprotein</keyword>
<keyword id="KW-0689">Ribosomal protein</keyword>